<feature type="chain" id="PRO_0000444609" description="Pseudouridylate synthase 7 homolog">
    <location>
        <begin position="1"/>
        <end position="660"/>
    </location>
</feature>
<feature type="domain" description="TRUD" evidence="2">
    <location>
        <begin position="369"/>
        <end position="579"/>
    </location>
</feature>
<feature type="region of interest" description="Disordered" evidence="3">
    <location>
        <begin position="1"/>
        <end position="99"/>
    </location>
</feature>
<feature type="compositionally biased region" description="Basic and acidic residues" evidence="3">
    <location>
        <begin position="22"/>
        <end position="32"/>
    </location>
</feature>
<feature type="compositionally biased region" description="Acidic residues" evidence="3">
    <location>
        <begin position="76"/>
        <end position="99"/>
    </location>
</feature>
<feature type="active site" description="Nucleophile" evidence="1">
    <location>
        <position position="293"/>
    </location>
</feature>
<feature type="modified residue" description="Phosphoserine" evidence="1">
    <location>
        <position position="7"/>
    </location>
</feature>
<feature type="modified residue" description="Phosphoserine" evidence="1">
    <location>
        <position position="126"/>
    </location>
</feature>
<feature type="splice variant" id="VSP_059623" description="In isoform 2.">
    <original>N</original>
    <variation>KVRAAAD</variation>
    <location>
        <position position="243"/>
    </location>
</feature>
<gene>
    <name evidence="6" type="primary">Pus7</name>
    <name evidence="4" type="synonym">Kiaa1897</name>
</gene>
<dbReference type="EC" id="5.4.99.-" evidence="1"/>
<dbReference type="EMBL" id="AK173290">
    <property type="protein sequence ID" value="BAD32568.1"/>
    <property type="status" value="ALT_INIT"/>
    <property type="molecule type" value="mRNA"/>
</dbReference>
<dbReference type="EMBL" id="AK142271">
    <property type="protein sequence ID" value="BAE25003.1"/>
    <property type="status" value="ALT_INIT"/>
    <property type="molecule type" value="mRNA"/>
</dbReference>
<dbReference type="EMBL" id="AK160849">
    <property type="protein sequence ID" value="BAE36044.1"/>
    <property type="molecule type" value="mRNA"/>
</dbReference>
<dbReference type="EMBL" id="AC117614">
    <property type="status" value="NOT_ANNOTATED_CDS"/>
    <property type="molecule type" value="Genomic_DNA"/>
</dbReference>
<dbReference type="EMBL" id="BC008544">
    <property type="protein sequence ID" value="AAH08544.2"/>
    <property type="molecule type" value="mRNA"/>
</dbReference>
<dbReference type="EMBL" id="BC138533">
    <property type="protein sequence ID" value="AAI38534.1"/>
    <property type="molecule type" value="mRNA"/>
</dbReference>
<dbReference type="EMBL" id="BC145316">
    <property type="protein sequence ID" value="AAI45317.1"/>
    <property type="molecule type" value="mRNA"/>
</dbReference>
<dbReference type="CCDS" id="CCDS51431.1">
    <molecule id="Q91VU7-1"/>
</dbReference>
<dbReference type="CCDS" id="CCDS80219.1">
    <molecule id="Q91VU7-2"/>
</dbReference>
<dbReference type="RefSeq" id="NP_001276709.1">
    <molecule id="Q91VU7-2"/>
    <property type="nucleotide sequence ID" value="NM_001289780.1"/>
</dbReference>
<dbReference type="RefSeq" id="NP_001276710.1">
    <molecule id="Q91VU7-1"/>
    <property type="nucleotide sequence ID" value="NM_001289781.1"/>
</dbReference>
<dbReference type="RefSeq" id="NP_848490.2">
    <molecule id="Q91VU7-1"/>
    <property type="nucleotide sequence ID" value="NM_178403.5"/>
</dbReference>
<dbReference type="SMR" id="Q91VU7"/>
<dbReference type="FunCoup" id="Q91VU7">
    <property type="interactions" value="2918"/>
</dbReference>
<dbReference type="STRING" id="10090.ENSMUSP00000114588"/>
<dbReference type="GlyGen" id="Q91VU7">
    <property type="glycosylation" value="1 site, 1 O-linked glycan (1 site)"/>
</dbReference>
<dbReference type="iPTMnet" id="Q91VU7"/>
<dbReference type="PhosphoSitePlus" id="Q91VU7"/>
<dbReference type="PaxDb" id="10090-ENSMUSP00000113801"/>
<dbReference type="ProteomicsDB" id="340938">
    <molecule id="Q91VU7-1"/>
</dbReference>
<dbReference type="ProteomicsDB" id="342885"/>
<dbReference type="Pumba" id="Q91VU7"/>
<dbReference type="Antibodypedia" id="17076">
    <property type="antibodies" value="134 antibodies from 19 providers"/>
</dbReference>
<dbReference type="DNASU" id="78697"/>
<dbReference type="Ensembl" id="ENSMUST00000119946.8">
    <molecule id="Q91VU7-1"/>
    <property type="protein sequence ID" value="ENSMUSP00000113801.2"/>
    <property type="gene ID" value="ENSMUSG00000057541.15"/>
</dbReference>
<dbReference type="Ensembl" id="ENSMUST00000131992.8">
    <molecule id="Q91VU7-1"/>
    <property type="protein sequence ID" value="ENSMUSP00000123129.2"/>
    <property type="gene ID" value="ENSMUSG00000057541.15"/>
</dbReference>
<dbReference type="Ensembl" id="ENSMUST00000148618.8">
    <molecule id="Q91VU7-2"/>
    <property type="protein sequence ID" value="ENSMUSP00000114588.3"/>
    <property type="gene ID" value="ENSMUSG00000057541.15"/>
</dbReference>
<dbReference type="GeneID" id="78697"/>
<dbReference type="KEGG" id="mmu:78697"/>
<dbReference type="UCSC" id="uc008wqo.2">
    <molecule id="Q91VU7-1"/>
    <property type="organism name" value="mouse"/>
</dbReference>
<dbReference type="UCSC" id="uc012dsw.2">
    <property type="organism name" value="mouse"/>
</dbReference>
<dbReference type="AGR" id="MGI:1925947"/>
<dbReference type="CTD" id="54517"/>
<dbReference type="MGI" id="MGI:1925947">
    <property type="gene designation" value="Pus7"/>
</dbReference>
<dbReference type="VEuPathDB" id="HostDB:ENSMUSG00000057541"/>
<dbReference type="eggNOG" id="KOG2339">
    <property type="taxonomic scope" value="Eukaryota"/>
</dbReference>
<dbReference type="GeneTree" id="ENSGT00530000063554"/>
<dbReference type="HOGENOM" id="CLU_005281_0_1_1"/>
<dbReference type="InParanoid" id="Q91VU7"/>
<dbReference type="OMA" id="WINYFGH"/>
<dbReference type="OrthoDB" id="48228at9989"/>
<dbReference type="PhylomeDB" id="Q91VU7"/>
<dbReference type="TreeFam" id="TF314278"/>
<dbReference type="BioGRID-ORCS" id="78697">
    <property type="hits" value="15 hits in 78 CRISPR screens"/>
</dbReference>
<dbReference type="ChiTaRS" id="Pus7">
    <property type="organism name" value="mouse"/>
</dbReference>
<dbReference type="PRO" id="PR:Q91VU7"/>
<dbReference type="Proteomes" id="UP000000589">
    <property type="component" value="Chromosome 5"/>
</dbReference>
<dbReference type="Bgee" id="ENSMUSG00000057541">
    <property type="expression patterns" value="Expressed in ureteric bud tip and 249 other cell types or tissues"/>
</dbReference>
<dbReference type="ExpressionAtlas" id="Q91VU7">
    <property type="expression patterns" value="baseline and differential"/>
</dbReference>
<dbReference type="GO" id="GO:0005634">
    <property type="term" value="C:nucleus"/>
    <property type="evidence" value="ECO:0000250"/>
    <property type="project" value="UniProtKB"/>
</dbReference>
<dbReference type="GO" id="GO:0019899">
    <property type="term" value="F:enzyme binding"/>
    <property type="evidence" value="ECO:0007669"/>
    <property type="project" value="Ensembl"/>
</dbReference>
<dbReference type="GO" id="GO:0009982">
    <property type="term" value="F:pseudouridine synthase activity"/>
    <property type="evidence" value="ECO:0000250"/>
    <property type="project" value="UniProtKB"/>
</dbReference>
<dbReference type="GO" id="GO:0003723">
    <property type="term" value="F:RNA binding"/>
    <property type="evidence" value="ECO:0007669"/>
    <property type="project" value="InterPro"/>
</dbReference>
<dbReference type="GO" id="GO:0160150">
    <property type="term" value="F:tRNA pseudouridine(13) synthase activity"/>
    <property type="evidence" value="ECO:0007669"/>
    <property type="project" value="Ensembl"/>
</dbReference>
<dbReference type="GO" id="GO:0006397">
    <property type="term" value="P:mRNA processing"/>
    <property type="evidence" value="ECO:0007669"/>
    <property type="project" value="UniProtKB-KW"/>
</dbReference>
<dbReference type="GO" id="GO:1990481">
    <property type="term" value="P:mRNA pseudouridine synthesis"/>
    <property type="evidence" value="ECO:0000250"/>
    <property type="project" value="UniProtKB"/>
</dbReference>
<dbReference type="GO" id="GO:0017148">
    <property type="term" value="P:negative regulation of translation"/>
    <property type="evidence" value="ECO:0000250"/>
    <property type="project" value="UniProtKB"/>
</dbReference>
<dbReference type="GO" id="GO:1902036">
    <property type="term" value="P:regulation of hematopoietic stem cell differentiation"/>
    <property type="evidence" value="ECO:0000250"/>
    <property type="project" value="UniProtKB"/>
</dbReference>
<dbReference type="GO" id="GO:2000380">
    <property type="term" value="P:regulation of mesoderm development"/>
    <property type="evidence" value="ECO:0000250"/>
    <property type="project" value="UniProtKB"/>
</dbReference>
<dbReference type="GO" id="GO:0008380">
    <property type="term" value="P:RNA splicing"/>
    <property type="evidence" value="ECO:0007669"/>
    <property type="project" value="UniProtKB-KW"/>
</dbReference>
<dbReference type="GO" id="GO:0031119">
    <property type="term" value="P:tRNA pseudouridine synthesis"/>
    <property type="evidence" value="ECO:0000250"/>
    <property type="project" value="UniProtKB"/>
</dbReference>
<dbReference type="CDD" id="cd02576">
    <property type="entry name" value="PseudoU_synth_ScPUS7"/>
    <property type="match status" value="1"/>
</dbReference>
<dbReference type="FunFam" id="3.30.2350.20:FF:000002">
    <property type="entry name" value="Pseudouridylate synthase 7 homolog"/>
    <property type="match status" value="1"/>
</dbReference>
<dbReference type="FunFam" id="3.30.2350.20:FF:000003">
    <property type="entry name" value="Pseudouridylate synthase 7 homolog"/>
    <property type="match status" value="1"/>
</dbReference>
<dbReference type="Gene3D" id="3.30.2350.20">
    <property type="entry name" value="TruD, catalytic domain"/>
    <property type="match status" value="2"/>
</dbReference>
<dbReference type="InterPro" id="IPR020103">
    <property type="entry name" value="PsdUridine_synth_cat_dom_sf"/>
</dbReference>
<dbReference type="InterPro" id="IPR001656">
    <property type="entry name" value="PsdUridine_synth_TruD"/>
</dbReference>
<dbReference type="InterPro" id="IPR020119">
    <property type="entry name" value="PsdUridine_synth_TruD_CS"/>
</dbReference>
<dbReference type="InterPro" id="IPR011760">
    <property type="entry name" value="PsdUridine_synth_TruD_insert"/>
</dbReference>
<dbReference type="InterPro" id="IPR042214">
    <property type="entry name" value="TruD_catalytic"/>
</dbReference>
<dbReference type="NCBIfam" id="TIGR00094">
    <property type="entry name" value="tRNA_TruD_broad"/>
    <property type="match status" value="1"/>
</dbReference>
<dbReference type="PANTHER" id="PTHR13326:SF31">
    <property type="entry name" value="PSEUDOURIDYLATE SYNTHASE 7 HOMOLOG"/>
    <property type="match status" value="1"/>
</dbReference>
<dbReference type="PANTHER" id="PTHR13326">
    <property type="entry name" value="TRNA PSEUDOURIDINE SYNTHASE D"/>
    <property type="match status" value="1"/>
</dbReference>
<dbReference type="Pfam" id="PF01142">
    <property type="entry name" value="TruD"/>
    <property type="match status" value="1"/>
</dbReference>
<dbReference type="PIRSF" id="PIRSF037016">
    <property type="entry name" value="Pseudouridin_synth_euk_prd"/>
    <property type="match status" value="1"/>
</dbReference>
<dbReference type="SUPFAM" id="SSF55120">
    <property type="entry name" value="Pseudouridine synthase"/>
    <property type="match status" value="1"/>
</dbReference>
<dbReference type="PROSITE" id="PS50984">
    <property type="entry name" value="TRUD"/>
    <property type="match status" value="1"/>
</dbReference>
<dbReference type="PROSITE" id="PS01268">
    <property type="entry name" value="UPF0024"/>
    <property type="match status" value="1"/>
</dbReference>
<reference key="1">
    <citation type="journal article" date="2004" name="DNA Res.">
        <title>Prediction of the coding sequences of mouse homologues of KIAA gene: IV. The complete nucleotide sequences of 500 mouse KIAA-homologous cDNAs identified by screening of terminal sequences of cDNA clones randomly sampled from size-fractionated libraries.</title>
        <authorList>
            <person name="Okazaki N."/>
            <person name="Kikuno R."/>
            <person name="Ohara R."/>
            <person name="Inamoto S."/>
            <person name="Koseki H."/>
            <person name="Hiraoka S."/>
            <person name="Saga Y."/>
            <person name="Seino S."/>
            <person name="Nishimura M."/>
            <person name="Kaisho T."/>
            <person name="Hoshino K."/>
            <person name="Kitamura H."/>
            <person name="Nagase T."/>
            <person name="Ohara O."/>
            <person name="Koga H."/>
        </authorList>
    </citation>
    <scope>NUCLEOTIDE SEQUENCE [LARGE SCALE MRNA] (ISOFORM 1)</scope>
    <source>
        <tissue>Embryonic tail</tissue>
    </source>
</reference>
<reference key="2">
    <citation type="journal article" date="2005" name="Science">
        <title>The transcriptional landscape of the mammalian genome.</title>
        <authorList>
            <person name="Carninci P."/>
            <person name="Kasukawa T."/>
            <person name="Katayama S."/>
            <person name="Gough J."/>
            <person name="Frith M.C."/>
            <person name="Maeda N."/>
            <person name="Oyama R."/>
            <person name="Ravasi T."/>
            <person name="Lenhard B."/>
            <person name="Wells C."/>
            <person name="Kodzius R."/>
            <person name="Shimokawa K."/>
            <person name="Bajic V.B."/>
            <person name="Brenner S.E."/>
            <person name="Batalov S."/>
            <person name="Forrest A.R."/>
            <person name="Zavolan M."/>
            <person name="Davis M.J."/>
            <person name="Wilming L.G."/>
            <person name="Aidinis V."/>
            <person name="Allen J.E."/>
            <person name="Ambesi-Impiombato A."/>
            <person name="Apweiler R."/>
            <person name="Aturaliya R.N."/>
            <person name="Bailey T.L."/>
            <person name="Bansal M."/>
            <person name="Baxter L."/>
            <person name="Beisel K.W."/>
            <person name="Bersano T."/>
            <person name="Bono H."/>
            <person name="Chalk A.M."/>
            <person name="Chiu K.P."/>
            <person name="Choudhary V."/>
            <person name="Christoffels A."/>
            <person name="Clutterbuck D.R."/>
            <person name="Crowe M.L."/>
            <person name="Dalla E."/>
            <person name="Dalrymple B.P."/>
            <person name="de Bono B."/>
            <person name="Della Gatta G."/>
            <person name="di Bernardo D."/>
            <person name="Down T."/>
            <person name="Engstrom P."/>
            <person name="Fagiolini M."/>
            <person name="Faulkner G."/>
            <person name="Fletcher C.F."/>
            <person name="Fukushima T."/>
            <person name="Furuno M."/>
            <person name="Futaki S."/>
            <person name="Gariboldi M."/>
            <person name="Georgii-Hemming P."/>
            <person name="Gingeras T.R."/>
            <person name="Gojobori T."/>
            <person name="Green R.E."/>
            <person name="Gustincich S."/>
            <person name="Harbers M."/>
            <person name="Hayashi Y."/>
            <person name="Hensch T.K."/>
            <person name="Hirokawa N."/>
            <person name="Hill D."/>
            <person name="Huminiecki L."/>
            <person name="Iacono M."/>
            <person name="Ikeo K."/>
            <person name="Iwama A."/>
            <person name="Ishikawa T."/>
            <person name="Jakt M."/>
            <person name="Kanapin A."/>
            <person name="Katoh M."/>
            <person name="Kawasawa Y."/>
            <person name="Kelso J."/>
            <person name="Kitamura H."/>
            <person name="Kitano H."/>
            <person name="Kollias G."/>
            <person name="Krishnan S.P."/>
            <person name="Kruger A."/>
            <person name="Kummerfeld S.K."/>
            <person name="Kurochkin I.V."/>
            <person name="Lareau L.F."/>
            <person name="Lazarevic D."/>
            <person name="Lipovich L."/>
            <person name="Liu J."/>
            <person name="Liuni S."/>
            <person name="McWilliam S."/>
            <person name="Madan Babu M."/>
            <person name="Madera M."/>
            <person name="Marchionni L."/>
            <person name="Matsuda H."/>
            <person name="Matsuzawa S."/>
            <person name="Miki H."/>
            <person name="Mignone F."/>
            <person name="Miyake S."/>
            <person name="Morris K."/>
            <person name="Mottagui-Tabar S."/>
            <person name="Mulder N."/>
            <person name="Nakano N."/>
            <person name="Nakauchi H."/>
            <person name="Ng P."/>
            <person name="Nilsson R."/>
            <person name="Nishiguchi S."/>
            <person name="Nishikawa S."/>
            <person name="Nori F."/>
            <person name="Ohara O."/>
            <person name="Okazaki Y."/>
            <person name="Orlando V."/>
            <person name="Pang K.C."/>
            <person name="Pavan W.J."/>
            <person name="Pavesi G."/>
            <person name="Pesole G."/>
            <person name="Petrovsky N."/>
            <person name="Piazza S."/>
            <person name="Reed J."/>
            <person name="Reid J.F."/>
            <person name="Ring B.Z."/>
            <person name="Ringwald M."/>
            <person name="Rost B."/>
            <person name="Ruan Y."/>
            <person name="Salzberg S.L."/>
            <person name="Sandelin A."/>
            <person name="Schneider C."/>
            <person name="Schoenbach C."/>
            <person name="Sekiguchi K."/>
            <person name="Semple C.A."/>
            <person name="Seno S."/>
            <person name="Sessa L."/>
            <person name="Sheng Y."/>
            <person name="Shibata Y."/>
            <person name="Shimada H."/>
            <person name="Shimada K."/>
            <person name="Silva D."/>
            <person name="Sinclair B."/>
            <person name="Sperling S."/>
            <person name="Stupka E."/>
            <person name="Sugiura K."/>
            <person name="Sultana R."/>
            <person name="Takenaka Y."/>
            <person name="Taki K."/>
            <person name="Tammoja K."/>
            <person name="Tan S.L."/>
            <person name="Tang S."/>
            <person name="Taylor M.S."/>
            <person name="Tegner J."/>
            <person name="Teichmann S.A."/>
            <person name="Ueda H.R."/>
            <person name="van Nimwegen E."/>
            <person name="Verardo R."/>
            <person name="Wei C.L."/>
            <person name="Yagi K."/>
            <person name="Yamanishi H."/>
            <person name="Zabarovsky E."/>
            <person name="Zhu S."/>
            <person name="Zimmer A."/>
            <person name="Hide W."/>
            <person name="Bult C."/>
            <person name="Grimmond S.M."/>
            <person name="Teasdale R.D."/>
            <person name="Liu E.T."/>
            <person name="Brusic V."/>
            <person name="Quackenbush J."/>
            <person name="Wahlestedt C."/>
            <person name="Mattick J.S."/>
            <person name="Hume D.A."/>
            <person name="Kai C."/>
            <person name="Sasaki D."/>
            <person name="Tomaru Y."/>
            <person name="Fukuda S."/>
            <person name="Kanamori-Katayama M."/>
            <person name="Suzuki M."/>
            <person name="Aoki J."/>
            <person name="Arakawa T."/>
            <person name="Iida J."/>
            <person name="Imamura K."/>
            <person name="Itoh M."/>
            <person name="Kato T."/>
            <person name="Kawaji H."/>
            <person name="Kawagashira N."/>
            <person name="Kawashima T."/>
            <person name="Kojima M."/>
            <person name="Kondo S."/>
            <person name="Konno H."/>
            <person name="Nakano K."/>
            <person name="Ninomiya N."/>
            <person name="Nishio T."/>
            <person name="Okada M."/>
            <person name="Plessy C."/>
            <person name="Shibata K."/>
            <person name="Shiraki T."/>
            <person name="Suzuki S."/>
            <person name="Tagami M."/>
            <person name="Waki K."/>
            <person name="Watahiki A."/>
            <person name="Okamura-Oho Y."/>
            <person name="Suzuki H."/>
            <person name="Kawai J."/>
            <person name="Hayashizaki Y."/>
        </authorList>
    </citation>
    <scope>NUCLEOTIDE SEQUENCE [LARGE SCALE MRNA] (ISOFORM 1)</scope>
    <source>
        <strain>C57BL/6J</strain>
        <tissue>Brain</tissue>
        <tissue>Heart</tissue>
    </source>
</reference>
<reference key="3">
    <citation type="journal article" date="2009" name="PLoS Biol.">
        <title>Lineage-specific biology revealed by a finished genome assembly of the mouse.</title>
        <authorList>
            <person name="Church D.M."/>
            <person name="Goodstadt L."/>
            <person name="Hillier L.W."/>
            <person name="Zody M.C."/>
            <person name="Goldstein S."/>
            <person name="She X."/>
            <person name="Bult C.J."/>
            <person name="Agarwala R."/>
            <person name="Cherry J.L."/>
            <person name="DiCuccio M."/>
            <person name="Hlavina W."/>
            <person name="Kapustin Y."/>
            <person name="Meric P."/>
            <person name="Maglott D."/>
            <person name="Birtle Z."/>
            <person name="Marques A.C."/>
            <person name="Graves T."/>
            <person name="Zhou S."/>
            <person name="Teague B."/>
            <person name="Potamousis K."/>
            <person name="Churas C."/>
            <person name="Place M."/>
            <person name="Herschleb J."/>
            <person name="Runnheim R."/>
            <person name="Forrest D."/>
            <person name="Amos-Landgraf J."/>
            <person name="Schwartz D.C."/>
            <person name="Cheng Z."/>
            <person name="Lindblad-Toh K."/>
            <person name="Eichler E.E."/>
            <person name="Ponting C.P."/>
        </authorList>
    </citation>
    <scope>NUCLEOTIDE SEQUENCE [LARGE SCALE GENOMIC DNA]</scope>
    <source>
        <strain>C57BL/6J</strain>
    </source>
</reference>
<reference key="4">
    <citation type="journal article" date="2004" name="Genome Res.">
        <title>The status, quality, and expansion of the NIH full-length cDNA project: the Mammalian Gene Collection (MGC).</title>
        <authorList>
            <consortium name="The MGC Project Team"/>
        </authorList>
    </citation>
    <scope>NUCLEOTIDE SEQUENCE [LARGE SCALE MRNA] (ISOFORMS 1 AND 2)</scope>
    <source>
        <strain>C57BL/6J</strain>
        <strain>FVB/N</strain>
        <tissue>Brain</tissue>
    </source>
</reference>
<organism>
    <name type="scientific">Mus musculus</name>
    <name type="common">Mouse</name>
    <dbReference type="NCBI Taxonomy" id="10090"/>
    <lineage>
        <taxon>Eukaryota</taxon>
        <taxon>Metazoa</taxon>
        <taxon>Chordata</taxon>
        <taxon>Craniata</taxon>
        <taxon>Vertebrata</taxon>
        <taxon>Euteleostomi</taxon>
        <taxon>Mammalia</taxon>
        <taxon>Eutheria</taxon>
        <taxon>Euarchontoglires</taxon>
        <taxon>Glires</taxon>
        <taxon>Rodentia</taxon>
        <taxon>Myomorpha</taxon>
        <taxon>Muroidea</taxon>
        <taxon>Muridae</taxon>
        <taxon>Murinae</taxon>
        <taxon>Mus</taxon>
        <taxon>Mus</taxon>
    </lineage>
</organism>
<proteinExistence type="evidence at transcript level"/>
<sequence>MEMTSTSLKRGCLVVEDNDSVTPHDETKKQKVSEGCLTSSQDGVENDGLHRSENEPGPPEAESTVKDDENSSAQVQEEEEEEEEEDGLSEAGEEEEAESFADMMKHGLTELDVGICKFVSSHHGFSGILKERYSDFVVHEIGKDGRISHLDDLSVPVDEEDPPEDALTVLTAEDRQQLEELQLFKNKETSVAIEVIEDTKEKRTVIHQAIKSLFPGLETKTEDREGRKYIVAYHAAGKKALANPRKHSWPKSRGSYCHFVLYKENKDTMDAINVLSKYLRVKPNIFSYMGTKDKRAITVQEIAVLKISAQRLAHLNKCLMNLKLGNFSYQKTPLKLGALQGNHFTVVLRNITGTDEQVQQAMQSLRETGFINYYGMQRFGTTAVPTYQVGRAILQNSWTEVMDLILKPRSGAEKGYLVKCREEWAKTKDPASALKKLPVKRCVEGQLLRGLSRYGMKNIVSAFGIIPRNNRLMYIHSYQSYVWNTMVSRRIEEYGLRPVPGDLVLKGATPTYIEEDDVDNYSIHDVVMPLPGFDVIYPKHKISEAYREMLAADNLDIDNMRHTIRDYSLSGAYRRIIIRPQSVSWEVVAYDDPKIPLFNTDVDNLEGKPPPVFASEGKYRALKMDFSLPPSTYATMAIREVLKMDTSIKNQTQLNTSWLR</sequence>
<protein>
    <recommendedName>
        <fullName evidence="5">Pseudouridylate synthase 7 homolog</fullName>
        <ecNumber evidence="1">5.4.99.-</ecNumber>
    </recommendedName>
</protein>
<keyword id="KW-0025">Alternative splicing</keyword>
<keyword id="KW-0413">Isomerase</keyword>
<keyword id="KW-0507">mRNA processing</keyword>
<keyword id="KW-0508">mRNA splicing</keyword>
<keyword id="KW-0539">Nucleus</keyword>
<keyword id="KW-0597">Phosphoprotein</keyword>
<keyword id="KW-1185">Reference proteome</keyword>
<keyword id="KW-0819">tRNA processing</keyword>
<name>PUS7_MOUSE</name>
<comment type="function">
    <text evidence="1">Pseudouridylate synthase that catalyzes pseudouridylation of RNAs. Acts as a regulator of protein synthesis in embryonic stem cells by mediating pseudouridylation of RNA fragments derived from tRNAs (tRFs): pseudouridylated tRFs inhibit translation by targeting the translation initiation complex. Also catalyzes pseudouridylation of mRNAs: mediates pseudouridylation of mRNAs with the consensus sequence 5'-UGUAG-3'. Acts as a regulator of pre-mRNA splicing by mediating pseudouridylation of pre-mRNAs at locations associated with alternatively spliced regions. Pseudouridylation of pre-mRNAs near splice sites directly regulates mRNA splicing and mRNA 3'-end processing. In addition to mRNAs and tRNAs, binds other types of RNAs, such as snRNAs, Y RNAs and vault RNAs, suggesting that it can catalyze pseudouridylation of many RNA types.</text>
</comment>
<comment type="catalytic activity">
    <reaction evidence="1">
        <text>a uridine in tRNA = a pseudouridine in tRNA</text>
        <dbReference type="Rhea" id="RHEA:54572"/>
        <dbReference type="Rhea" id="RHEA-COMP:13339"/>
        <dbReference type="Rhea" id="RHEA-COMP:13934"/>
        <dbReference type="ChEBI" id="CHEBI:65314"/>
        <dbReference type="ChEBI" id="CHEBI:65315"/>
    </reaction>
</comment>
<comment type="catalytic activity">
    <reaction evidence="1">
        <text>uridine(13) in tRNA = pseudouridine(13) in tRNA</text>
        <dbReference type="Rhea" id="RHEA:42540"/>
        <dbReference type="Rhea" id="RHEA-COMP:10105"/>
        <dbReference type="Rhea" id="RHEA-COMP:10106"/>
        <dbReference type="ChEBI" id="CHEBI:65314"/>
        <dbReference type="ChEBI" id="CHEBI:65315"/>
    </reaction>
</comment>
<comment type="catalytic activity">
    <reaction evidence="1">
        <text>a uridine in mRNA = a pseudouridine in mRNA</text>
        <dbReference type="Rhea" id="RHEA:56644"/>
        <dbReference type="Rhea" id="RHEA-COMP:14658"/>
        <dbReference type="Rhea" id="RHEA-COMP:14659"/>
        <dbReference type="ChEBI" id="CHEBI:65314"/>
        <dbReference type="ChEBI" id="CHEBI:65315"/>
    </reaction>
</comment>
<comment type="subunit">
    <text evidence="1">Interacts with SIRT1.</text>
</comment>
<comment type="subcellular location">
    <subcellularLocation>
        <location evidence="1">Nucleus</location>
    </subcellularLocation>
</comment>
<comment type="alternative products">
    <event type="alternative splicing"/>
    <isoform>
        <id>Q91VU7-1</id>
        <name>1</name>
        <sequence type="displayed"/>
    </isoform>
    <isoform>
        <id>Q91VU7-2</id>
        <name>2</name>
        <sequence type="described" ref="VSP_059623"/>
    </isoform>
</comment>
<comment type="similarity">
    <text evidence="5">Belongs to the pseudouridine synthase TruD family.</text>
</comment>
<comment type="sequence caution" evidence="5">
    <conflict type="erroneous initiation">
        <sequence resource="EMBL-CDS" id="BAD32568"/>
    </conflict>
    <text>Extended N-terminus.</text>
</comment>
<comment type="sequence caution" evidence="5">
    <conflict type="erroneous initiation">
        <sequence resource="EMBL-CDS" id="BAE25003"/>
    </conflict>
    <text>Extended N-terminus.</text>
</comment>
<evidence type="ECO:0000250" key="1">
    <source>
        <dbReference type="UniProtKB" id="Q96PZ0"/>
    </source>
</evidence>
<evidence type="ECO:0000255" key="2">
    <source>
        <dbReference type="PROSITE-ProRule" id="PRU00342"/>
    </source>
</evidence>
<evidence type="ECO:0000256" key="3">
    <source>
        <dbReference type="SAM" id="MobiDB-lite"/>
    </source>
</evidence>
<evidence type="ECO:0000303" key="4">
    <source>
    </source>
</evidence>
<evidence type="ECO:0000305" key="5"/>
<evidence type="ECO:0000312" key="6">
    <source>
        <dbReference type="MGI" id="MGI:1925947"/>
    </source>
</evidence>
<accession>Q91VU7</accession>
<accession>B7ZNL8</accession>
<accession>F7AC41</accession>
<accession>Q3TUC7</accession>
<accession>Q3UQN6</accession>
<accession>Q69Z76</accession>